<evidence type="ECO:0000255" key="1">
    <source>
        <dbReference type="HAMAP-Rule" id="MF_00227"/>
    </source>
</evidence>
<gene>
    <name evidence="1" type="primary">rnpA</name>
    <name type="ordered locus">SGO_0178</name>
</gene>
<protein>
    <recommendedName>
        <fullName evidence="1">Ribonuclease P protein component</fullName>
        <shortName evidence="1">RNase P protein</shortName>
        <shortName evidence="1">RNaseP protein</shortName>
        <ecNumber evidence="1">3.1.26.5</ecNumber>
    </recommendedName>
    <alternativeName>
        <fullName evidence="1">Protein C5</fullName>
    </alternativeName>
</protein>
<reference key="1">
    <citation type="journal article" date="2007" name="J. Bacteriol.">
        <title>Genome-wide transcriptional changes in Streptococcus gordonii in response to competence signaling peptide.</title>
        <authorList>
            <person name="Vickerman M.M."/>
            <person name="Iobst S."/>
            <person name="Jesionowski A.M."/>
            <person name="Gill S.R."/>
        </authorList>
    </citation>
    <scope>NUCLEOTIDE SEQUENCE [LARGE SCALE GENOMIC DNA]</scope>
    <source>
        <strain>Challis / ATCC 35105 / BCRC 15272 / CH1 / DL1 / V288</strain>
    </source>
</reference>
<name>RNPA_STRGC</name>
<comment type="function">
    <text evidence="1">RNaseP catalyzes the removal of the 5'-leader sequence from pre-tRNA to produce the mature 5'-terminus. It can also cleave other RNA substrates such as 4.5S RNA. The protein component plays an auxiliary but essential role in vivo by binding to the 5'-leader sequence and broadening the substrate specificity of the ribozyme.</text>
</comment>
<comment type="catalytic activity">
    <reaction evidence="1">
        <text>Endonucleolytic cleavage of RNA, removing 5'-extranucleotides from tRNA precursor.</text>
        <dbReference type="EC" id="3.1.26.5"/>
    </reaction>
</comment>
<comment type="subunit">
    <text evidence="1">Consists of a catalytic RNA component (M1 or rnpB) and a protein subunit.</text>
</comment>
<comment type="similarity">
    <text evidence="1">Belongs to the RnpA family.</text>
</comment>
<dbReference type="EC" id="3.1.26.5" evidence="1"/>
<dbReference type="EMBL" id="CP000725">
    <property type="protein sequence ID" value="ABV11078.1"/>
    <property type="molecule type" value="Genomic_DNA"/>
</dbReference>
<dbReference type="RefSeq" id="WP_011999719.1">
    <property type="nucleotide sequence ID" value="NC_009785.1"/>
</dbReference>
<dbReference type="SMR" id="A8AUN9"/>
<dbReference type="STRING" id="467705.SGO_0178"/>
<dbReference type="KEGG" id="sgo:SGO_0178"/>
<dbReference type="eggNOG" id="COG0594">
    <property type="taxonomic scope" value="Bacteria"/>
</dbReference>
<dbReference type="HOGENOM" id="CLU_117179_9_1_9"/>
<dbReference type="Proteomes" id="UP000001131">
    <property type="component" value="Chromosome"/>
</dbReference>
<dbReference type="GO" id="GO:0030677">
    <property type="term" value="C:ribonuclease P complex"/>
    <property type="evidence" value="ECO:0007669"/>
    <property type="project" value="TreeGrafter"/>
</dbReference>
<dbReference type="GO" id="GO:0042781">
    <property type="term" value="F:3'-tRNA processing endoribonuclease activity"/>
    <property type="evidence" value="ECO:0007669"/>
    <property type="project" value="TreeGrafter"/>
</dbReference>
<dbReference type="GO" id="GO:0004526">
    <property type="term" value="F:ribonuclease P activity"/>
    <property type="evidence" value="ECO:0007669"/>
    <property type="project" value="UniProtKB-UniRule"/>
</dbReference>
<dbReference type="GO" id="GO:0000049">
    <property type="term" value="F:tRNA binding"/>
    <property type="evidence" value="ECO:0007669"/>
    <property type="project" value="UniProtKB-UniRule"/>
</dbReference>
<dbReference type="GO" id="GO:0001682">
    <property type="term" value="P:tRNA 5'-leader removal"/>
    <property type="evidence" value="ECO:0007669"/>
    <property type="project" value="UniProtKB-UniRule"/>
</dbReference>
<dbReference type="FunFam" id="3.30.230.10:FF:000021">
    <property type="entry name" value="Ribonuclease P protein component"/>
    <property type="match status" value="1"/>
</dbReference>
<dbReference type="Gene3D" id="3.30.230.10">
    <property type="match status" value="1"/>
</dbReference>
<dbReference type="HAMAP" id="MF_00227">
    <property type="entry name" value="RNase_P"/>
    <property type="match status" value="1"/>
</dbReference>
<dbReference type="InterPro" id="IPR020568">
    <property type="entry name" value="Ribosomal_Su5_D2-typ_SF"/>
</dbReference>
<dbReference type="InterPro" id="IPR014721">
    <property type="entry name" value="Ribsml_uS5_D2-typ_fold_subgr"/>
</dbReference>
<dbReference type="InterPro" id="IPR000100">
    <property type="entry name" value="RNase_P"/>
</dbReference>
<dbReference type="NCBIfam" id="TIGR00188">
    <property type="entry name" value="rnpA"/>
    <property type="match status" value="1"/>
</dbReference>
<dbReference type="PANTHER" id="PTHR33992">
    <property type="entry name" value="RIBONUCLEASE P PROTEIN COMPONENT"/>
    <property type="match status" value="1"/>
</dbReference>
<dbReference type="PANTHER" id="PTHR33992:SF1">
    <property type="entry name" value="RIBONUCLEASE P PROTEIN COMPONENT"/>
    <property type="match status" value="1"/>
</dbReference>
<dbReference type="Pfam" id="PF00825">
    <property type="entry name" value="Ribonuclease_P"/>
    <property type="match status" value="1"/>
</dbReference>
<dbReference type="SUPFAM" id="SSF54211">
    <property type="entry name" value="Ribosomal protein S5 domain 2-like"/>
    <property type="match status" value="1"/>
</dbReference>
<keyword id="KW-0255">Endonuclease</keyword>
<keyword id="KW-0378">Hydrolase</keyword>
<keyword id="KW-0540">Nuclease</keyword>
<keyword id="KW-1185">Reference proteome</keyword>
<keyword id="KW-0694">RNA-binding</keyword>
<keyword id="KW-0819">tRNA processing</keyword>
<accession>A8AUN9</accession>
<sequence>MKKSYRVKSEKDFNAIFNDKQSVANKRFVIYKLDKDQKHFRVGLSVSKKLGNAVVRNGIKRKIRHVLIEHRQELQAVDFVIIARKGVEELDYKETERNLLHVLKLAKIYQEGIPSEKEE</sequence>
<organism>
    <name type="scientific">Streptococcus gordonii (strain Challis / ATCC 35105 / BCRC 15272 / CH1 / DL1 / V288)</name>
    <dbReference type="NCBI Taxonomy" id="467705"/>
    <lineage>
        <taxon>Bacteria</taxon>
        <taxon>Bacillati</taxon>
        <taxon>Bacillota</taxon>
        <taxon>Bacilli</taxon>
        <taxon>Lactobacillales</taxon>
        <taxon>Streptococcaceae</taxon>
        <taxon>Streptococcus</taxon>
    </lineage>
</organism>
<proteinExistence type="inferred from homology"/>
<feature type="chain" id="PRO_1000078212" description="Ribonuclease P protein component">
    <location>
        <begin position="1"/>
        <end position="119"/>
    </location>
</feature>